<accession>A1YCA5</accession>
<proteinExistence type="evidence at protein level"/>
<comment type="function">
    <text evidence="2">Catalyzes the transfer of the 4'-phosphopantetheine moiety from coenzyme A to a serine residue in the acyl-carrier domain of carboxylic acid reductase Car, thus converting apo-Car to fully active holo-Car. Is probably also responsible for the activation of other proteins with phosphopantetheine attachment sites.</text>
</comment>
<comment type="catalytic activity">
    <reaction evidence="2">
        <text>apo-[ACP] + CoA = holo-[ACP] + adenosine 3',5'-bisphosphate + H(+)</text>
        <dbReference type="Rhea" id="RHEA:12068"/>
        <dbReference type="Rhea" id="RHEA-COMP:9685"/>
        <dbReference type="Rhea" id="RHEA-COMP:9690"/>
        <dbReference type="ChEBI" id="CHEBI:15378"/>
        <dbReference type="ChEBI" id="CHEBI:29999"/>
        <dbReference type="ChEBI" id="CHEBI:57287"/>
        <dbReference type="ChEBI" id="CHEBI:58343"/>
        <dbReference type="ChEBI" id="CHEBI:64479"/>
        <dbReference type="EC" id="2.7.8.7"/>
    </reaction>
</comment>
<comment type="cofactor">
    <cofactor evidence="1">
        <name>Mg(2+)</name>
        <dbReference type="ChEBI" id="CHEBI:18420"/>
    </cofactor>
</comment>
<comment type="subunit">
    <text evidence="2">Monomer.</text>
</comment>
<comment type="similarity">
    <text evidence="3">Belongs to the P-Pant transferase superfamily.</text>
</comment>
<reference key="1">
    <citation type="journal article" date="2007" name="J. Biol. Chem.">
        <title>Reduction of carboxylic acids by Nocardia aldehyde oxidoreductase requires a phosphopantetheinylated enzyme.</title>
        <authorList>
            <person name="Venkitasubramanian P."/>
            <person name="Daniels L."/>
            <person name="Rosazza J.P."/>
        </authorList>
    </citation>
    <scope>NUCLEOTIDE SEQUENCE [GENOMIC DNA]</scope>
    <scope>IDENTIFICATION</scope>
    <scope>FUNCTION</scope>
    <scope>CATALYTIC ACTIVITY</scope>
    <scope>SUBUNIT</scope>
    <source>
        <strain>DSM 45197 / JCM 18299 / NRRL 5646 / BM123</strain>
    </source>
</reference>
<gene>
    <name type="primary">npt</name>
</gene>
<protein>
    <recommendedName>
        <fullName>4'-phosphopantetheinyl transferase Npt</fullName>
        <shortName>PPTase</shortName>
        <ecNumber>2.7.8.7</ecNumber>
    </recommendedName>
</protein>
<name>PPTAS_NOCIO</name>
<feature type="chain" id="PRO_0000425450" description="4'-phosphopantetheinyl transferase Npt">
    <location>
        <begin position="1"/>
        <end position="222"/>
    </location>
</feature>
<feature type="binding site" evidence="1">
    <location>
        <position position="105"/>
    </location>
    <ligand>
        <name>Mg(2+)</name>
        <dbReference type="ChEBI" id="CHEBI:18420"/>
    </ligand>
</feature>
<feature type="binding site" evidence="1">
    <location>
        <position position="107"/>
    </location>
    <ligand>
        <name>Mg(2+)</name>
        <dbReference type="ChEBI" id="CHEBI:18420"/>
    </ligand>
</feature>
<feature type="binding site" evidence="1">
    <location>
        <position position="147"/>
    </location>
    <ligand>
        <name>Mg(2+)</name>
        <dbReference type="ChEBI" id="CHEBI:18420"/>
    </ligand>
</feature>
<evidence type="ECO:0000250" key="1"/>
<evidence type="ECO:0000269" key="2">
    <source>
    </source>
</evidence>
<evidence type="ECO:0000305" key="3"/>
<organism>
    <name type="scientific">Nocardia iowensis</name>
    <dbReference type="NCBI Taxonomy" id="204891"/>
    <lineage>
        <taxon>Bacteria</taxon>
        <taxon>Bacillati</taxon>
        <taxon>Actinomycetota</taxon>
        <taxon>Actinomycetes</taxon>
        <taxon>Mycobacteriales</taxon>
        <taxon>Nocardiaceae</taxon>
        <taxon>Nocardia</taxon>
    </lineage>
</organism>
<keyword id="KW-0460">Magnesium</keyword>
<keyword id="KW-0479">Metal-binding</keyword>
<keyword id="KW-0808">Transferase</keyword>
<sequence length="222" mass="24287">MIETILPAGVESAELLEYPEDLKAHPAEEHLIAKSVEKRRRDFIGARHCARLALAELGEPPVAIGKGERGAPIWPRGVVGSLTHCDGYRAAAVAHKMRFRSIGIDAEPHATLPEGVLDSVSLPPEREWLKTTDSALHLDRLLFCAKEATYKAWWPLTARWLGFEEAHITFEIEDGSADSGNGTFHSELLVPGQTNDGGTPLLSFDGRWLIADGFILTAIAYA</sequence>
<dbReference type="EC" id="2.7.8.7"/>
<dbReference type="EMBL" id="DQ904035">
    <property type="protein sequence ID" value="ABI83656.1"/>
    <property type="molecule type" value="Genomic_DNA"/>
</dbReference>
<dbReference type="RefSeq" id="WP_218470469.1">
    <property type="nucleotide sequence ID" value="NZ_BAABJN010000006.1"/>
</dbReference>
<dbReference type="SMR" id="A1YCA5"/>
<dbReference type="GO" id="GO:0009366">
    <property type="term" value="C:enterobactin synthetase complex"/>
    <property type="evidence" value="ECO:0007669"/>
    <property type="project" value="InterPro"/>
</dbReference>
<dbReference type="GO" id="GO:0005886">
    <property type="term" value="C:plasma membrane"/>
    <property type="evidence" value="ECO:0007669"/>
    <property type="project" value="TreeGrafter"/>
</dbReference>
<dbReference type="GO" id="GO:0008897">
    <property type="term" value="F:holo-[acyl-carrier-protein] synthase activity"/>
    <property type="evidence" value="ECO:0007669"/>
    <property type="project" value="UniProtKB-EC"/>
</dbReference>
<dbReference type="GO" id="GO:0000287">
    <property type="term" value="F:magnesium ion binding"/>
    <property type="evidence" value="ECO:0007669"/>
    <property type="project" value="InterPro"/>
</dbReference>
<dbReference type="GO" id="GO:0009239">
    <property type="term" value="P:enterobactin biosynthetic process"/>
    <property type="evidence" value="ECO:0007669"/>
    <property type="project" value="InterPro"/>
</dbReference>
<dbReference type="Gene3D" id="3.90.470.20">
    <property type="entry name" value="4'-phosphopantetheinyl transferase domain"/>
    <property type="match status" value="1"/>
</dbReference>
<dbReference type="InterPro" id="IPR008278">
    <property type="entry name" value="4-PPantetheinyl_Trfase_dom"/>
</dbReference>
<dbReference type="InterPro" id="IPR037143">
    <property type="entry name" value="4-PPantetheinyl_Trfase_dom_sf"/>
</dbReference>
<dbReference type="InterPro" id="IPR041354">
    <property type="entry name" value="4PPT_N"/>
</dbReference>
<dbReference type="InterPro" id="IPR003542">
    <property type="entry name" value="Enbac_synth_compD-like"/>
</dbReference>
<dbReference type="InterPro" id="IPR053566">
    <property type="entry name" value="P-Pant_transferase"/>
</dbReference>
<dbReference type="NCBIfam" id="NF042923">
    <property type="entry name" value="4PPT_Npt"/>
    <property type="match status" value="1"/>
</dbReference>
<dbReference type="PANTHER" id="PTHR38096">
    <property type="entry name" value="ENTEROBACTIN SYNTHASE COMPONENT D"/>
    <property type="match status" value="1"/>
</dbReference>
<dbReference type="PANTHER" id="PTHR38096:SF1">
    <property type="entry name" value="ENTEROBACTIN SYNTHASE COMPONENT D"/>
    <property type="match status" value="1"/>
</dbReference>
<dbReference type="Pfam" id="PF17837">
    <property type="entry name" value="4PPT_N"/>
    <property type="match status" value="1"/>
</dbReference>
<dbReference type="Pfam" id="PF01648">
    <property type="entry name" value="ACPS"/>
    <property type="match status" value="1"/>
</dbReference>
<dbReference type="PRINTS" id="PR01399">
    <property type="entry name" value="ENTSNTHTASED"/>
</dbReference>
<dbReference type="SUPFAM" id="SSF56214">
    <property type="entry name" value="4'-phosphopantetheinyl transferase"/>
    <property type="match status" value="1"/>
</dbReference>